<organism>
    <name type="scientific">Rickettsia rickettsii (strain Sheila Smith)</name>
    <dbReference type="NCBI Taxonomy" id="392021"/>
    <lineage>
        <taxon>Bacteria</taxon>
        <taxon>Pseudomonadati</taxon>
        <taxon>Pseudomonadota</taxon>
        <taxon>Alphaproteobacteria</taxon>
        <taxon>Rickettsiales</taxon>
        <taxon>Rickettsiaceae</taxon>
        <taxon>Rickettsieae</taxon>
        <taxon>Rickettsia</taxon>
        <taxon>spotted fever group</taxon>
    </lineage>
</organism>
<name>CYAY_RICRS</name>
<accession>A8GRM5</accession>
<gene>
    <name evidence="1" type="primary">cyaY</name>
    <name type="ordered locus">A1G_02505</name>
</gene>
<proteinExistence type="inferred from homology"/>
<sequence length="103" mass="11688">MNNSEFSKIAETTIAYIAEKIEEQDKEASIDVDLQGDILNLDTDKGVYVINKQSAAKEIWLSSPVSGPYHFFYEQGKWTNRAGLELMAILTEELNIKFDTRPT</sequence>
<feature type="chain" id="PRO_1000010952" description="Iron-sulfur cluster assembly protein CyaY">
    <location>
        <begin position="1"/>
        <end position="103"/>
    </location>
</feature>
<comment type="function">
    <text evidence="1">Involved in iron-sulfur (Fe-S) cluster assembly. May act as a regulator of Fe-S biogenesis.</text>
</comment>
<comment type="similarity">
    <text evidence="1">Belongs to the frataxin family.</text>
</comment>
<keyword id="KW-0408">Iron</keyword>
<keyword id="KW-0479">Metal-binding</keyword>
<evidence type="ECO:0000255" key="1">
    <source>
        <dbReference type="HAMAP-Rule" id="MF_00142"/>
    </source>
</evidence>
<reference key="1">
    <citation type="submission" date="2007-09" db="EMBL/GenBank/DDBJ databases">
        <title>Complete genome sequence of Rickettsia rickettsii.</title>
        <authorList>
            <person name="Madan A."/>
            <person name="Fahey J."/>
            <person name="Helton E."/>
            <person name="Ketteman M."/>
            <person name="Madan A."/>
            <person name="Rodrigues S."/>
            <person name="Sanchez A."/>
            <person name="Dasch G."/>
            <person name="Eremeeva M."/>
        </authorList>
    </citation>
    <scope>NUCLEOTIDE SEQUENCE [LARGE SCALE GENOMIC DNA]</scope>
    <source>
        <strain>Sheila Smith</strain>
    </source>
</reference>
<protein>
    <recommendedName>
        <fullName evidence="1">Iron-sulfur cluster assembly protein CyaY</fullName>
    </recommendedName>
</protein>
<dbReference type="EMBL" id="CP000848">
    <property type="protein sequence ID" value="ABV76050.1"/>
    <property type="molecule type" value="Genomic_DNA"/>
</dbReference>
<dbReference type="RefSeq" id="WP_012150646.1">
    <property type="nucleotide sequence ID" value="NZ_CP121767.1"/>
</dbReference>
<dbReference type="SMR" id="A8GRM5"/>
<dbReference type="GeneID" id="79937209"/>
<dbReference type="KEGG" id="rri:A1G_02505"/>
<dbReference type="HOGENOM" id="CLU_080880_4_1_5"/>
<dbReference type="Proteomes" id="UP000006832">
    <property type="component" value="Chromosome"/>
</dbReference>
<dbReference type="GO" id="GO:0005737">
    <property type="term" value="C:cytoplasm"/>
    <property type="evidence" value="ECO:0007669"/>
    <property type="project" value="UniProtKB-ARBA"/>
</dbReference>
<dbReference type="GO" id="GO:0051537">
    <property type="term" value="F:2 iron, 2 sulfur cluster binding"/>
    <property type="evidence" value="ECO:0007669"/>
    <property type="project" value="TreeGrafter"/>
</dbReference>
<dbReference type="GO" id="GO:0008199">
    <property type="term" value="F:ferric iron binding"/>
    <property type="evidence" value="ECO:0007669"/>
    <property type="project" value="InterPro"/>
</dbReference>
<dbReference type="GO" id="GO:0008198">
    <property type="term" value="F:ferrous iron binding"/>
    <property type="evidence" value="ECO:0007669"/>
    <property type="project" value="TreeGrafter"/>
</dbReference>
<dbReference type="GO" id="GO:0004322">
    <property type="term" value="F:ferroxidase activity"/>
    <property type="evidence" value="ECO:0007669"/>
    <property type="project" value="TreeGrafter"/>
</dbReference>
<dbReference type="GO" id="GO:0034986">
    <property type="term" value="F:iron chaperone activity"/>
    <property type="evidence" value="ECO:0007669"/>
    <property type="project" value="TreeGrafter"/>
</dbReference>
<dbReference type="GO" id="GO:0006879">
    <property type="term" value="P:intracellular iron ion homeostasis"/>
    <property type="evidence" value="ECO:0007669"/>
    <property type="project" value="TreeGrafter"/>
</dbReference>
<dbReference type="GO" id="GO:0016226">
    <property type="term" value="P:iron-sulfur cluster assembly"/>
    <property type="evidence" value="ECO:0007669"/>
    <property type="project" value="UniProtKB-UniRule"/>
</dbReference>
<dbReference type="Gene3D" id="3.30.920.10">
    <property type="entry name" value="Frataxin/CyaY"/>
    <property type="match status" value="1"/>
</dbReference>
<dbReference type="HAMAP" id="MF_00142">
    <property type="entry name" value="CyaY"/>
    <property type="match status" value="1"/>
</dbReference>
<dbReference type="InterPro" id="IPR047584">
    <property type="entry name" value="CyaY"/>
</dbReference>
<dbReference type="InterPro" id="IPR002908">
    <property type="entry name" value="Frataxin/CyaY"/>
</dbReference>
<dbReference type="InterPro" id="IPR036524">
    <property type="entry name" value="Frataxin/CyaY_sf"/>
</dbReference>
<dbReference type="InterPro" id="IPR020895">
    <property type="entry name" value="Frataxin_CS"/>
</dbReference>
<dbReference type="NCBIfam" id="TIGR03421">
    <property type="entry name" value="FeS_CyaY"/>
    <property type="match status" value="1"/>
</dbReference>
<dbReference type="PANTHER" id="PTHR16821">
    <property type="entry name" value="FRATAXIN"/>
    <property type="match status" value="1"/>
</dbReference>
<dbReference type="PANTHER" id="PTHR16821:SF2">
    <property type="entry name" value="FRATAXIN, MITOCHONDRIAL"/>
    <property type="match status" value="1"/>
</dbReference>
<dbReference type="Pfam" id="PF01491">
    <property type="entry name" value="Frataxin_Cyay"/>
    <property type="match status" value="1"/>
</dbReference>
<dbReference type="SMART" id="SM01219">
    <property type="entry name" value="Frataxin_Cyay"/>
    <property type="match status" value="1"/>
</dbReference>
<dbReference type="SUPFAM" id="SSF55387">
    <property type="entry name" value="Frataxin/Nqo15-like"/>
    <property type="match status" value="1"/>
</dbReference>
<dbReference type="PROSITE" id="PS01344">
    <property type="entry name" value="FRATAXIN_1"/>
    <property type="match status" value="1"/>
</dbReference>
<dbReference type="PROSITE" id="PS50810">
    <property type="entry name" value="FRATAXIN_2"/>
    <property type="match status" value="1"/>
</dbReference>